<keyword id="KW-0749">Sporulation</keyword>
<keyword id="KW-0800">Toxin</keyword>
<keyword id="KW-0843">Virulence</keyword>
<evidence type="ECO:0000305" key="1"/>
<gene>
    <name type="primary">cry1Gb</name>
    <name type="synonym">cryH2</name>
    <name type="synonym">cryIG(b)</name>
</gene>
<name>CR1GB_BACTZ</name>
<organism>
    <name type="scientific">Bacillus thuringiensis subsp. wuhanensis</name>
    <dbReference type="NCBI Taxonomy" id="52024"/>
    <lineage>
        <taxon>Bacteria</taxon>
        <taxon>Bacillati</taxon>
        <taxon>Bacillota</taxon>
        <taxon>Bacilli</taxon>
        <taxon>Bacillales</taxon>
        <taxon>Bacillaceae</taxon>
        <taxon>Bacillus</taxon>
        <taxon>Bacillus cereus group</taxon>
    </lineage>
</organism>
<sequence>MEINNQNQCVPYNCLNNPESEILNVAIFSSEQVAEIHLKITRLILENFLPGGSFAFGLFDLIWGIFNEDQWSAFLRQVEELINQRITEFARGQAIQRLVGFGRSYDEYILALKEWENDPDNPASKERVRTRFRTTDDALLTGVPLMAIPGFELATLSVYAQSANLHLALLRDAVFFGERWGLTQTNINDLYSRLKNSIRDYTNHCVRFYNIGLGNLNVIRPEYYRFQRELTISVLDLVALFPNYDIRTYPIPTKSQLTREIYTDPIISPGAQAGYTLQDVLREPHLMDFLNRLIIYTGEYRGIRHWAGHEVESSRTGMMTNIRFPLYGTAATAEPTRFITPSTFPGLNLFYRTLSAPIFRDEPGANIIIRYRTSLVEGVGFIQPNNGEQLYRVRGTLDSLDQLPLEGESSLTEYSHRLCHVRFAQSLRNAEPLDYARVPMFSWTHRSATPTNTIDPDVITQIPLVKAFNLHSGATVVRGPGFTGGDILRRTNAGNFGDMRVNITAPLSQRYRVRIRYASTANLQFHTSINGRAINQANFPATMNSGENLQSGSFRVAGFTTPFTFSDALSTFTIGAFSFSSNNEVYIDGIEFVPAEVTFATESDQDRAQKAVNALFTSSNQIGLKTDVTNYHIDQVSNLVECLSDEFCLDEKRELSEKVKHAKRLCDERNLLQDPNFRGINREPDRGWRGSTDITIQRGDDVFKENYVTLPGTFDECYPTYLYQKIDESKLKAYTRYELRGYIEDSQDLEIYLIRYNAKHETVNVPGTGSLWPLSAQSPIGKCGEPNRCATHLEWNPDLDCSCRDGEKCAHHSHHFSLDIDVGCTDLNEDLGVWVIFKIKTQDGHARLGNLEFLEEKPLLGEALARVKRAEKKWRDKREKLELETNIVYKEAKKSVDALFVNSQYDRLQADTNIAIIHAADKRVHSIREAYLPELSVIPGVNAAIFEELEGRIFTAYSLYDARNVIKNGDFNNGLSCWNVKGHVDVEEQNNHRSVLVVPEWEAEVSQEVRVCPGRGYILRVTAYKEGYGEGCVTIHEIEDNTDELKFSNCVEEEIYPNNTVTCNDYTATQEEYEGTYTSRNRGYDGAYESNSSVPADYASAYEEKAYTDGRRDNTCESNRGYGDYTPLPAGYVTKELEYFPETDKVWIEIGETEGTFIVDSVELLLMEE</sequence>
<reference key="1">
    <citation type="journal article" date="2000" name="Curr. Microbiol.">
        <title>Cloning of two new cry genes from Bacillus thuringiensis subsp. wuhanensis strain.</title>
        <authorList>
            <person name="Kuo W.-S."/>
            <person name="Lin J.-H."/>
            <person name="Tzeng C.-C."/>
            <person name="Kao S.-S."/>
            <person name="Chak K.-F."/>
        </authorList>
    </citation>
    <scope>NUCLEOTIDE SEQUENCE [GENOMIC DNA]</scope>
    <source>
        <strain>HD-525</strain>
    </source>
</reference>
<protein>
    <recommendedName>
        <fullName>Pesticidal crystal protein Cry1Gb</fullName>
    </recommendedName>
    <alternativeName>
        <fullName>133 kDa crystal protein</fullName>
    </alternativeName>
    <alternativeName>
        <fullName>Crystaline entomocidal protoxin</fullName>
    </alternativeName>
    <alternativeName>
        <fullName>Insecticidal delta-endotoxin CryIG(b)</fullName>
    </alternativeName>
</protein>
<feature type="chain" id="PRO_0000174045" description="Pesticidal crystal protein Cry1Gb">
    <location>
        <begin position="1"/>
        <end position="1169"/>
    </location>
</feature>
<comment type="function">
    <text>Promotes colloidosmotic lysis by binding to the midgut epithelial cells of lepidopteran larvae. Toxic to Pieris rapae.</text>
</comment>
<comment type="developmental stage">
    <text>The crystal protein is produced during sporulation and is accumulated both as an inclusion and as part of the spore coat.</text>
</comment>
<comment type="miscellaneous">
    <text>Toxic segment of the protein is located in the N-terminus.</text>
</comment>
<comment type="similarity">
    <text evidence="1">Belongs to the delta endotoxin family.</text>
</comment>
<proteinExistence type="evidence at transcript level"/>
<dbReference type="EMBL" id="U70725">
    <property type="protein sequence ID" value="AAD10291.1"/>
    <property type="molecule type" value="Genomic_DNA"/>
</dbReference>
<dbReference type="SMR" id="Q9ZAZ6"/>
<dbReference type="GO" id="GO:0005102">
    <property type="term" value="F:signaling receptor binding"/>
    <property type="evidence" value="ECO:0007669"/>
    <property type="project" value="InterPro"/>
</dbReference>
<dbReference type="GO" id="GO:0090729">
    <property type="term" value="F:toxin activity"/>
    <property type="evidence" value="ECO:0007669"/>
    <property type="project" value="UniProtKB-KW"/>
</dbReference>
<dbReference type="GO" id="GO:0030435">
    <property type="term" value="P:sporulation resulting in formation of a cellular spore"/>
    <property type="evidence" value="ECO:0007669"/>
    <property type="project" value="UniProtKB-KW"/>
</dbReference>
<dbReference type="GO" id="GO:0001907">
    <property type="term" value="P:symbiont-mediated killing of host cell"/>
    <property type="evidence" value="ECO:0007669"/>
    <property type="project" value="InterPro"/>
</dbReference>
<dbReference type="CDD" id="cd04085">
    <property type="entry name" value="delta_endotoxin_C"/>
    <property type="match status" value="1"/>
</dbReference>
<dbReference type="Gene3D" id="2.60.120.260">
    <property type="entry name" value="Galactose-binding domain-like"/>
    <property type="match status" value="2"/>
</dbReference>
<dbReference type="Gene3D" id="2.100.10.10">
    <property type="entry name" value="Pesticidal crystal protein, central domain"/>
    <property type="match status" value="1"/>
</dbReference>
<dbReference type="Gene3D" id="1.20.190.10">
    <property type="entry name" value="Pesticidal crystal protein, N-terminal domain"/>
    <property type="match status" value="1"/>
</dbReference>
<dbReference type="InterPro" id="IPR048645">
    <property type="entry name" value="Cry1Ac-like_dom-VII"/>
</dbReference>
<dbReference type="InterPro" id="IPR041587">
    <property type="entry name" value="Cry_V"/>
</dbReference>
<dbReference type="InterPro" id="IPR008979">
    <property type="entry name" value="Galactose-bd-like_sf"/>
</dbReference>
<dbReference type="InterPro" id="IPR038979">
    <property type="entry name" value="Pest_crys"/>
</dbReference>
<dbReference type="InterPro" id="IPR054544">
    <property type="entry name" value="Pest_crys_Cry1Aa_dom-IV"/>
</dbReference>
<dbReference type="InterPro" id="IPR005638">
    <property type="entry name" value="Pest_crys_dom-III"/>
</dbReference>
<dbReference type="InterPro" id="IPR005639">
    <property type="entry name" value="Pest_crys_dom_I"/>
</dbReference>
<dbReference type="InterPro" id="IPR036716">
    <property type="entry name" value="Pest_crys_N_sf"/>
</dbReference>
<dbReference type="InterPro" id="IPR036399">
    <property type="entry name" value="Pest_cryst_cen_dom_sf"/>
</dbReference>
<dbReference type="InterPro" id="IPR001178">
    <property type="entry name" value="Pest_cryst_dom_II"/>
</dbReference>
<dbReference type="PANTHER" id="PTHR37003">
    <property type="entry name" value="ENDOTOXIN_N DOMAIN-CONTAINING PROTEIN-RELATED"/>
    <property type="match status" value="1"/>
</dbReference>
<dbReference type="PANTHER" id="PTHR37003:SF2">
    <property type="entry name" value="PESTICIDAL CRYSTAL PROTEIN N-TERMINAL DOMAIN-CONTAINING PROTEIN"/>
    <property type="match status" value="1"/>
</dbReference>
<dbReference type="Pfam" id="PF17997">
    <property type="entry name" value="Cry1Ac_D5"/>
    <property type="match status" value="1"/>
</dbReference>
<dbReference type="Pfam" id="PF21463">
    <property type="entry name" value="Cry1Ac_dom-VII"/>
    <property type="match status" value="1"/>
</dbReference>
<dbReference type="Pfam" id="PF03944">
    <property type="entry name" value="Endotoxin_C"/>
    <property type="match status" value="1"/>
</dbReference>
<dbReference type="Pfam" id="PF18449">
    <property type="entry name" value="Endotoxin_C2"/>
    <property type="match status" value="1"/>
</dbReference>
<dbReference type="Pfam" id="PF00555">
    <property type="entry name" value="Endotoxin_M"/>
    <property type="match status" value="1"/>
</dbReference>
<dbReference type="Pfam" id="PF03945">
    <property type="entry name" value="Endotoxin_N"/>
    <property type="match status" value="1"/>
</dbReference>
<dbReference type="SUPFAM" id="SSF51096">
    <property type="entry name" value="delta-Endotoxin (insectocide), middle domain"/>
    <property type="match status" value="1"/>
</dbReference>
<dbReference type="SUPFAM" id="SSF56849">
    <property type="entry name" value="delta-Endotoxin (insectocide), N-terminal domain"/>
    <property type="match status" value="1"/>
</dbReference>
<dbReference type="SUPFAM" id="SSF49785">
    <property type="entry name" value="Galactose-binding domain-like"/>
    <property type="match status" value="1"/>
</dbReference>
<accession>Q9ZAZ6</accession>